<protein>
    <recommendedName>
        <fullName evidence="1">Cytochrome c biogenesis protein CcsA</fullName>
    </recommendedName>
</protein>
<reference key="1">
    <citation type="journal article" date="2008" name="Nucleic Acids Res.">
        <title>The complete nucleotide sequences of the five genetically distinct plastid genomes of Oenothera, subsection Oenothera: I. Sequence evaluation and plastome evolution.</title>
        <authorList>
            <person name="Greiner S."/>
            <person name="Wang X."/>
            <person name="Rauwolf U."/>
            <person name="Silber M.V."/>
            <person name="Mayer K."/>
            <person name="Meurer J."/>
            <person name="Haberer G."/>
            <person name="Herrmann R.G."/>
        </authorList>
    </citation>
    <scope>NUCLEOTIDE SEQUENCE [LARGE SCALE GENOMIC DNA]</scope>
    <source>
        <strain>cv. Atrovirens</strain>
    </source>
</reference>
<gene>
    <name evidence="1" type="primary">ccsA</name>
</gene>
<comment type="function">
    <text evidence="1">Required during biogenesis of c-type cytochromes (cytochrome c6 and cytochrome f) at the step of heme attachment.</text>
</comment>
<comment type="subunit">
    <text evidence="1">May interact with Ccs1.</text>
</comment>
<comment type="subcellular location">
    <subcellularLocation>
        <location evidence="1">Plastid</location>
        <location evidence="1">Chloroplast thylakoid membrane</location>
        <topology evidence="1">Multi-pass membrane protein</topology>
    </subcellularLocation>
</comment>
<comment type="similarity">
    <text evidence="1">Belongs to the CcmF/CycK/Ccl1/NrfE/CcsA family.</text>
</comment>
<keyword id="KW-0150">Chloroplast</keyword>
<keyword id="KW-0201">Cytochrome c-type biogenesis</keyword>
<keyword id="KW-0472">Membrane</keyword>
<keyword id="KW-0934">Plastid</keyword>
<keyword id="KW-0793">Thylakoid</keyword>
<keyword id="KW-0812">Transmembrane</keyword>
<keyword id="KW-1133">Transmembrane helix</keyword>
<geneLocation type="chloroplast"/>
<proteinExistence type="inferred from homology"/>
<evidence type="ECO:0000255" key="1">
    <source>
        <dbReference type="HAMAP-Rule" id="MF_01391"/>
    </source>
</evidence>
<feature type="chain" id="PRO_0000353779" description="Cytochrome c biogenesis protein CcsA">
    <location>
        <begin position="1"/>
        <end position="319"/>
    </location>
</feature>
<feature type="transmembrane region" description="Helical" evidence="1">
    <location>
        <begin position="9"/>
        <end position="29"/>
    </location>
</feature>
<feature type="transmembrane region" description="Helical" evidence="1">
    <location>
        <begin position="44"/>
        <end position="64"/>
    </location>
</feature>
<feature type="transmembrane region" description="Helical" evidence="1">
    <location>
        <begin position="71"/>
        <end position="91"/>
    </location>
</feature>
<feature type="transmembrane region" description="Helical" evidence="1">
    <location>
        <begin position="143"/>
        <end position="163"/>
    </location>
</feature>
<feature type="transmembrane region" description="Helical" evidence="1">
    <location>
        <begin position="225"/>
        <end position="245"/>
    </location>
</feature>
<feature type="transmembrane region" description="Helical" evidence="1">
    <location>
        <begin position="259"/>
        <end position="273"/>
    </location>
</feature>
<feature type="transmembrane region" description="Helical" evidence="1">
    <location>
        <begin position="286"/>
        <end position="306"/>
    </location>
</feature>
<dbReference type="EMBL" id="EU262891">
    <property type="protein sequence ID" value="ABX10169.1"/>
    <property type="molecule type" value="Genomic_DNA"/>
</dbReference>
<dbReference type="RefSeq" id="YP_001687499.1">
    <property type="nucleotide sequence ID" value="NC_010362.1"/>
</dbReference>
<dbReference type="SMR" id="B0Z5H6"/>
<dbReference type="GeneID" id="5955478"/>
<dbReference type="GO" id="GO:0009535">
    <property type="term" value="C:chloroplast thylakoid membrane"/>
    <property type="evidence" value="ECO:0007669"/>
    <property type="project" value="UniProtKB-SubCell"/>
</dbReference>
<dbReference type="GO" id="GO:0005886">
    <property type="term" value="C:plasma membrane"/>
    <property type="evidence" value="ECO:0007669"/>
    <property type="project" value="TreeGrafter"/>
</dbReference>
<dbReference type="GO" id="GO:0020037">
    <property type="term" value="F:heme binding"/>
    <property type="evidence" value="ECO:0007669"/>
    <property type="project" value="InterPro"/>
</dbReference>
<dbReference type="GO" id="GO:0017004">
    <property type="term" value="P:cytochrome complex assembly"/>
    <property type="evidence" value="ECO:0007669"/>
    <property type="project" value="UniProtKB-UniRule"/>
</dbReference>
<dbReference type="HAMAP" id="MF_01391">
    <property type="entry name" value="CytC_CcsA"/>
    <property type="match status" value="1"/>
</dbReference>
<dbReference type="InterPro" id="IPR002541">
    <property type="entry name" value="Cyt_c_assembly"/>
</dbReference>
<dbReference type="InterPro" id="IPR017562">
    <property type="entry name" value="Cyt_c_biogenesis_CcsA"/>
</dbReference>
<dbReference type="InterPro" id="IPR045062">
    <property type="entry name" value="Cyt_c_biogenesis_CcsA/CcmC"/>
</dbReference>
<dbReference type="NCBIfam" id="TIGR03144">
    <property type="entry name" value="cytochr_II_ccsB"/>
    <property type="match status" value="1"/>
</dbReference>
<dbReference type="PANTHER" id="PTHR30071:SF1">
    <property type="entry name" value="CYTOCHROME B_B6 PROTEIN-RELATED"/>
    <property type="match status" value="1"/>
</dbReference>
<dbReference type="PANTHER" id="PTHR30071">
    <property type="entry name" value="HEME EXPORTER PROTEIN C"/>
    <property type="match status" value="1"/>
</dbReference>
<dbReference type="Pfam" id="PF01578">
    <property type="entry name" value="Cytochrom_C_asm"/>
    <property type="match status" value="1"/>
</dbReference>
<organism>
    <name type="scientific">Oenothera parviflora</name>
    <name type="common">Small-flowered evening primrose</name>
    <name type="synonym">Oenothera cruciata</name>
    <dbReference type="NCBI Taxonomy" id="482429"/>
    <lineage>
        <taxon>Eukaryota</taxon>
        <taxon>Viridiplantae</taxon>
        <taxon>Streptophyta</taxon>
        <taxon>Embryophyta</taxon>
        <taxon>Tracheophyta</taxon>
        <taxon>Spermatophyta</taxon>
        <taxon>Magnoliopsida</taxon>
        <taxon>eudicotyledons</taxon>
        <taxon>Gunneridae</taxon>
        <taxon>Pentapetalae</taxon>
        <taxon>rosids</taxon>
        <taxon>malvids</taxon>
        <taxon>Myrtales</taxon>
        <taxon>Onagraceae</taxon>
        <taxon>Onagroideae</taxon>
        <taxon>Onagreae</taxon>
        <taxon>Oenothera</taxon>
    </lineage>
</organism>
<accession>B0Z5H6</accession>
<name>CCSA_OENPA</name>
<sequence>MIFYTLEHILTHISFSLVSIGITIFLITLSVDEIIGLYDSSEKGVIGTFLCITGLLVTRWAYSGHFPLSNLYESLLFLSWSFAIIHMFPYLKKQKSYVRTITSSSTIFTQGLVTSGLLSEMQQSEILVPALQSQWLMMHVSMMVLGYAALLCGSLLSVALLVITFRKARKIFSKKKAFLKDSFSFVEIQYRNEPSNVLLSTSFISSKNYYRAQLIQQLDRWSSRIISLGFIFLTIGILSGAVWANEAWGSYWNWDPKETWAFITWTMFAIYLHTRTNPNFQSVNSAIVAFLGFIIIWICYFGVNLLGIGLHSYGSFNLH</sequence>